<evidence type="ECO:0000255" key="1">
    <source>
        <dbReference type="HAMAP-Rule" id="MF_00199"/>
    </source>
</evidence>
<name>APAH_BURM9</name>
<sequence>MTNFSSSPPIAFGDLQGCHAAYRQLFDTLAPAADTPLWFAGDLVNRGPASLATLREIAALGERAIAVLGNHDLHLLAVAAGIRTLKPGDTIGEILDAPDADDLIEWVRHRPFAHFERGMLMVHAGLLPQWDAALALELADELQRALRASNWRDTLRSLYGNDPNCWSPDLKHADRLRVAFNAFTRIRFCTPEGAMEFRANGGPAAAPAGYLPWFDAPGRKTADVTVVFGHWAALGLMLRENLVALDSGCVWGNRLSAVRLADDPAARVVTQVACERCGAADE</sequence>
<keyword id="KW-0378">Hydrolase</keyword>
<organism>
    <name type="scientific">Burkholderia mallei (strain NCTC 10229)</name>
    <dbReference type="NCBI Taxonomy" id="412022"/>
    <lineage>
        <taxon>Bacteria</taxon>
        <taxon>Pseudomonadati</taxon>
        <taxon>Pseudomonadota</taxon>
        <taxon>Betaproteobacteria</taxon>
        <taxon>Burkholderiales</taxon>
        <taxon>Burkholderiaceae</taxon>
        <taxon>Burkholderia</taxon>
        <taxon>pseudomallei group</taxon>
    </lineage>
</organism>
<feature type="chain" id="PRO_1000012047" description="Bis(5'-nucleosyl)-tetraphosphatase, symmetrical">
    <location>
        <begin position="1"/>
        <end position="282"/>
    </location>
</feature>
<proteinExistence type="inferred from homology"/>
<reference key="1">
    <citation type="journal article" date="2010" name="Genome Biol. Evol.">
        <title>Continuing evolution of Burkholderia mallei through genome reduction and large-scale rearrangements.</title>
        <authorList>
            <person name="Losada L."/>
            <person name="Ronning C.M."/>
            <person name="DeShazer D."/>
            <person name="Woods D."/>
            <person name="Fedorova N."/>
            <person name="Kim H.S."/>
            <person name="Shabalina S.A."/>
            <person name="Pearson T.R."/>
            <person name="Brinkac L."/>
            <person name="Tan P."/>
            <person name="Nandi T."/>
            <person name="Crabtree J."/>
            <person name="Badger J."/>
            <person name="Beckstrom-Sternberg S."/>
            <person name="Saqib M."/>
            <person name="Schutzer S.E."/>
            <person name="Keim P."/>
            <person name="Nierman W.C."/>
        </authorList>
    </citation>
    <scope>NUCLEOTIDE SEQUENCE [LARGE SCALE GENOMIC DNA]</scope>
    <source>
        <strain>NCTC 10229</strain>
    </source>
</reference>
<comment type="function">
    <text evidence="1">Hydrolyzes diadenosine 5',5'''-P1,P4-tetraphosphate to yield ADP.</text>
</comment>
<comment type="catalytic activity">
    <reaction evidence="1">
        <text>P(1),P(4)-bis(5'-adenosyl) tetraphosphate + H2O = 2 ADP + 2 H(+)</text>
        <dbReference type="Rhea" id="RHEA:24252"/>
        <dbReference type="ChEBI" id="CHEBI:15377"/>
        <dbReference type="ChEBI" id="CHEBI:15378"/>
        <dbReference type="ChEBI" id="CHEBI:58141"/>
        <dbReference type="ChEBI" id="CHEBI:456216"/>
        <dbReference type="EC" id="3.6.1.41"/>
    </reaction>
</comment>
<comment type="similarity">
    <text evidence="1">Belongs to the Ap4A hydrolase family.</text>
</comment>
<protein>
    <recommendedName>
        <fullName evidence="1">Bis(5'-nucleosyl)-tetraphosphatase, symmetrical</fullName>
        <ecNumber evidence="1">3.6.1.41</ecNumber>
    </recommendedName>
    <alternativeName>
        <fullName evidence="1">Ap4A hydrolase</fullName>
    </alternativeName>
    <alternativeName>
        <fullName evidence="1">Diadenosine 5',5'''-P1,P4-tetraphosphate pyrophosphohydrolase</fullName>
    </alternativeName>
    <alternativeName>
        <fullName evidence="1">Diadenosine tetraphosphatase</fullName>
    </alternativeName>
</protein>
<gene>
    <name evidence="1" type="primary">apaH</name>
    <name type="ordered locus">BMA10229_A2752</name>
</gene>
<dbReference type="EC" id="3.6.1.41" evidence="1"/>
<dbReference type="EMBL" id="CP000546">
    <property type="protein sequence ID" value="ABN03254.1"/>
    <property type="molecule type" value="Genomic_DNA"/>
</dbReference>
<dbReference type="RefSeq" id="WP_004186146.1">
    <property type="nucleotide sequence ID" value="NC_008836.1"/>
</dbReference>
<dbReference type="SMR" id="A2S9T5"/>
<dbReference type="KEGG" id="bml:BMA10229_A2752"/>
<dbReference type="HOGENOM" id="CLU_056184_1_0_4"/>
<dbReference type="Proteomes" id="UP000002283">
    <property type="component" value="Chromosome I"/>
</dbReference>
<dbReference type="GO" id="GO:0008803">
    <property type="term" value="F:bis(5'-nucleosyl)-tetraphosphatase (symmetrical) activity"/>
    <property type="evidence" value="ECO:0007669"/>
    <property type="project" value="UniProtKB-UniRule"/>
</dbReference>
<dbReference type="CDD" id="cd07422">
    <property type="entry name" value="MPP_ApaH"/>
    <property type="match status" value="1"/>
</dbReference>
<dbReference type="Gene3D" id="3.60.21.10">
    <property type="match status" value="1"/>
</dbReference>
<dbReference type="HAMAP" id="MF_00199">
    <property type="entry name" value="ApaH"/>
    <property type="match status" value="1"/>
</dbReference>
<dbReference type="InterPro" id="IPR004617">
    <property type="entry name" value="ApaH"/>
</dbReference>
<dbReference type="InterPro" id="IPR004843">
    <property type="entry name" value="Calcineurin-like_PHP_ApaH"/>
</dbReference>
<dbReference type="InterPro" id="IPR029052">
    <property type="entry name" value="Metallo-depent_PP-like"/>
</dbReference>
<dbReference type="NCBIfam" id="TIGR00668">
    <property type="entry name" value="apaH"/>
    <property type="match status" value="1"/>
</dbReference>
<dbReference type="NCBIfam" id="NF001204">
    <property type="entry name" value="PRK00166.1"/>
    <property type="match status" value="1"/>
</dbReference>
<dbReference type="PANTHER" id="PTHR40942">
    <property type="match status" value="1"/>
</dbReference>
<dbReference type="PANTHER" id="PTHR40942:SF4">
    <property type="entry name" value="CYTOCHROME C5"/>
    <property type="match status" value="1"/>
</dbReference>
<dbReference type="Pfam" id="PF00149">
    <property type="entry name" value="Metallophos"/>
    <property type="match status" value="1"/>
</dbReference>
<dbReference type="PIRSF" id="PIRSF000903">
    <property type="entry name" value="B5n-ttraPtase_sm"/>
    <property type="match status" value="1"/>
</dbReference>
<dbReference type="SUPFAM" id="SSF56300">
    <property type="entry name" value="Metallo-dependent phosphatases"/>
    <property type="match status" value="1"/>
</dbReference>
<accession>A2S9T5</accession>